<evidence type="ECO:0000250" key="1"/>
<evidence type="ECO:0000305" key="2"/>
<dbReference type="EC" id="3.5.99.6"/>
<dbReference type="EMBL" id="L07558">
    <property type="protein sequence ID" value="AAA34352.1"/>
    <property type="molecule type" value="mRNA"/>
</dbReference>
<dbReference type="EMBL" id="AF079804">
    <property type="protein sequence ID" value="AAF04334.1"/>
    <property type="molecule type" value="Genomic_DNA"/>
</dbReference>
<dbReference type="EMBL" id="CP017628">
    <property type="protein sequence ID" value="AOW30375.1"/>
    <property type="molecule type" value="Genomic_DNA"/>
</dbReference>
<dbReference type="PIR" id="A46652">
    <property type="entry name" value="A46652"/>
</dbReference>
<dbReference type="RefSeq" id="XP_712431.2">
    <property type="nucleotide sequence ID" value="XM_707338.2"/>
</dbReference>
<dbReference type="SMR" id="Q04802"/>
<dbReference type="STRING" id="237561.Q04802"/>
<dbReference type="EnsemblFungi" id="C6_04590C_A-T">
    <property type="protein sequence ID" value="C6_04590C_A-T-p1"/>
    <property type="gene ID" value="C6_04590C_A"/>
</dbReference>
<dbReference type="GeneID" id="3645966"/>
<dbReference type="KEGG" id="cal:CAALFM_C604590CA"/>
<dbReference type="CGD" id="CAL0000199480">
    <property type="gene designation" value="NAG1"/>
</dbReference>
<dbReference type="VEuPathDB" id="FungiDB:C6_04590C_A"/>
<dbReference type="eggNOG" id="KOG3148">
    <property type="taxonomic scope" value="Eukaryota"/>
</dbReference>
<dbReference type="HOGENOM" id="CLU_049611_0_1_1"/>
<dbReference type="InParanoid" id="Q04802"/>
<dbReference type="OrthoDB" id="7663298at2759"/>
<dbReference type="PHI-base" id="PHI:221"/>
<dbReference type="PRO" id="PR:Q04802"/>
<dbReference type="Proteomes" id="UP000000559">
    <property type="component" value="Chromosome 6"/>
</dbReference>
<dbReference type="GO" id="GO:0005737">
    <property type="term" value="C:cytoplasm"/>
    <property type="evidence" value="ECO:0000318"/>
    <property type="project" value="GO_Central"/>
</dbReference>
<dbReference type="GO" id="GO:0004342">
    <property type="term" value="F:glucosamine-6-phosphate deaminase activity"/>
    <property type="evidence" value="ECO:0000314"/>
    <property type="project" value="CGD"/>
</dbReference>
<dbReference type="GO" id="GO:0042802">
    <property type="term" value="F:identical protein binding"/>
    <property type="evidence" value="ECO:0000318"/>
    <property type="project" value="GO_Central"/>
</dbReference>
<dbReference type="GO" id="GO:0005975">
    <property type="term" value="P:carbohydrate metabolic process"/>
    <property type="evidence" value="ECO:0007669"/>
    <property type="project" value="InterPro"/>
</dbReference>
<dbReference type="GO" id="GO:0030447">
    <property type="term" value="P:filamentous growth"/>
    <property type="evidence" value="ECO:0000315"/>
    <property type="project" value="CGD"/>
</dbReference>
<dbReference type="GO" id="GO:0036180">
    <property type="term" value="P:filamentous growth of a population of unicellular organisms in response to biotic stimulus"/>
    <property type="evidence" value="ECO:0000315"/>
    <property type="project" value="CGD"/>
</dbReference>
<dbReference type="GO" id="GO:0006043">
    <property type="term" value="P:glucosamine catabolic process"/>
    <property type="evidence" value="ECO:0000318"/>
    <property type="project" value="GO_Central"/>
</dbReference>
<dbReference type="GO" id="GO:0006046">
    <property type="term" value="P:N-acetylglucosamine catabolic process"/>
    <property type="evidence" value="ECO:0000314"/>
    <property type="project" value="CGD"/>
</dbReference>
<dbReference type="GO" id="GO:0019262">
    <property type="term" value="P:N-acetylneuraminate catabolic process"/>
    <property type="evidence" value="ECO:0000318"/>
    <property type="project" value="GO_Central"/>
</dbReference>
<dbReference type="CDD" id="cd01399">
    <property type="entry name" value="GlcN6P_deaminase"/>
    <property type="match status" value="1"/>
</dbReference>
<dbReference type="Gene3D" id="3.40.50.1360">
    <property type="match status" value="1"/>
</dbReference>
<dbReference type="InterPro" id="IPR006148">
    <property type="entry name" value="Glc/Gal-6P_isomerase"/>
</dbReference>
<dbReference type="InterPro" id="IPR004547">
    <property type="entry name" value="Glucosamine6P_isomerase"/>
</dbReference>
<dbReference type="InterPro" id="IPR018321">
    <property type="entry name" value="Glucosamine6P_isomerase_CS"/>
</dbReference>
<dbReference type="InterPro" id="IPR037171">
    <property type="entry name" value="NagB/RpiA_transferase-like"/>
</dbReference>
<dbReference type="NCBIfam" id="TIGR00502">
    <property type="entry name" value="nagB"/>
    <property type="match status" value="1"/>
</dbReference>
<dbReference type="PANTHER" id="PTHR11280">
    <property type="entry name" value="GLUCOSAMINE-6-PHOSPHATE ISOMERASE"/>
    <property type="match status" value="1"/>
</dbReference>
<dbReference type="PANTHER" id="PTHR11280:SF5">
    <property type="entry name" value="GLUCOSAMINE-6-PHOSPHATE ISOMERASE"/>
    <property type="match status" value="1"/>
</dbReference>
<dbReference type="Pfam" id="PF01182">
    <property type="entry name" value="Glucosamine_iso"/>
    <property type="match status" value="1"/>
</dbReference>
<dbReference type="SUPFAM" id="SSF100950">
    <property type="entry name" value="NagB/RpiA/CoA transferase-like"/>
    <property type="match status" value="1"/>
</dbReference>
<dbReference type="PROSITE" id="PS01161">
    <property type="entry name" value="GLC_GALNAC_ISOMERASE"/>
    <property type="match status" value="1"/>
</dbReference>
<comment type="catalytic activity">
    <reaction>
        <text>alpha-D-glucosamine 6-phosphate + H2O = beta-D-fructose 6-phosphate + NH4(+)</text>
        <dbReference type="Rhea" id="RHEA:12172"/>
        <dbReference type="ChEBI" id="CHEBI:15377"/>
        <dbReference type="ChEBI" id="CHEBI:28938"/>
        <dbReference type="ChEBI" id="CHEBI:57634"/>
        <dbReference type="ChEBI" id="CHEBI:75989"/>
        <dbReference type="EC" id="3.5.99.6"/>
    </reaction>
</comment>
<comment type="subunit">
    <text>Monomer.</text>
</comment>
<comment type="induction">
    <text>By N-acetylglucosamine.</text>
</comment>
<comment type="similarity">
    <text evidence="2">Belongs to the glucosamine/galactosamine-6-phosphate isomerase family.</text>
</comment>
<sequence>MRQAIFSNPNDAAEYLANYIIAKINSTPRTFVLGLPTGSSPEGIYAKLIEANKQGRVSFKNVVTFNMDEYLGLAPSDLQSYHYFMYDKFFNHIDIPRENIHILNGLAANIDEECANYEKKIKQYGRIDLFLGGLGPEGHLAFNEAGSSRNSKTRKVELVESTIKANCRFFGNDESKVPKYALSVGISTILDNSDEIAIIVLGKNKQFALDKTVNGKPNDPKYPSSYLQDHANVLIVCDNAAAGLKSKL</sequence>
<protein>
    <recommendedName>
        <fullName>Glucosamine-6-phosphate isomerase</fullName>
        <ecNumber>3.5.99.6</ecNumber>
    </recommendedName>
    <alternativeName>
        <fullName>Glucosamine-6-phosphate deaminase</fullName>
        <shortName>GNPDA</shortName>
        <shortName>GlcN6P deaminase</shortName>
    </alternativeName>
</protein>
<feature type="chain" id="PRO_0000160121" description="Glucosamine-6-phosphate isomerase">
    <location>
        <begin position="1"/>
        <end position="248"/>
    </location>
</feature>
<feature type="active site" description="Proton acceptor; for enolization step" evidence="1">
    <location>
        <position position="68"/>
    </location>
</feature>
<feature type="active site" description="For ring-opening step" evidence="1">
    <location>
        <position position="137"/>
    </location>
</feature>
<feature type="active site" description="Proton acceptor; for ring-opening step" evidence="1">
    <location>
        <position position="139"/>
    </location>
</feature>
<feature type="active site" description="For ring-opening step" evidence="1">
    <location>
        <position position="144"/>
    </location>
</feature>
<feature type="sequence conflict" description="In Ref. 1; AAA34352 and 2; AAF04334." evidence="2" ref="1 2">
    <original>L</original>
    <variation>F</variation>
    <location>
        <position position="73"/>
    </location>
</feature>
<name>NAG1_CANAL</name>
<reference key="1">
    <citation type="journal article" date="1993" name="J. Biol. Chem.">
        <title>Molecular cloning and analysis of the NAG1 cDNA coding for glucosamine-6-phosphate deaminase from Candida albicans.</title>
        <authorList>
            <person name="Natarajan K."/>
            <person name="Datta A."/>
        </authorList>
    </citation>
    <scope>NUCLEOTIDE SEQUENCE [MRNA]</scope>
    <scope>PROTEIN SEQUENCE OF 1-35</scope>
    <source>
        <strain>SC5314 / ATCC MYA-2876</strain>
    </source>
</reference>
<reference key="2">
    <citation type="submission" date="1998-07" db="EMBL/GenBank/DDBJ databases">
        <title>Discrete inducible factors control the expression of C. albicans NAG1, which lies within a cluster of GlcNAc catabolic genes.</title>
        <authorList>
            <person name="Jyothi Kumar M."/>
            <person name="Jamaluddin M.D.S."/>
            <person name="Natarajan K."/>
            <person name="Deepinder K."/>
            <person name="Datta A."/>
        </authorList>
    </citation>
    <scope>NUCLEOTIDE SEQUENCE [GENOMIC DNA]</scope>
    <source>
        <strain>SC5314 / ATCC MYA-2876</strain>
    </source>
</reference>
<reference key="3">
    <citation type="journal article" date="2004" name="Proc. Natl. Acad. Sci. U.S.A.">
        <title>The diploid genome sequence of Candida albicans.</title>
        <authorList>
            <person name="Jones T."/>
            <person name="Federspiel N.A."/>
            <person name="Chibana H."/>
            <person name="Dungan J."/>
            <person name="Kalman S."/>
            <person name="Magee B.B."/>
            <person name="Newport G."/>
            <person name="Thorstenson Y.R."/>
            <person name="Agabian N."/>
            <person name="Magee P.T."/>
            <person name="Davis R.W."/>
            <person name="Scherer S."/>
        </authorList>
    </citation>
    <scope>NUCLEOTIDE SEQUENCE [LARGE SCALE GENOMIC DNA]</scope>
    <source>
        <strain>SC5314 / ATCC MYA-2876</strain>
    </source>
</reference>
<reference key="4">
    <citation type="journal article" date="2007" name="Genome Biol.">
        <title>Assembly of the Candida albicans genome into sixteen supercontigs aligned on the eight chromosomes.</title>
        <authorList>
            <person name="van het Hoog M."/>
            <person name="Rast T.J."/>
            <person name="Martchenko M."/>
            <person name="Grindle S."/>
            <person name="Dignard D."/>
            <person name="Hogues H."/>
            <person name="Cuomo C."/>
            <person name="Berriman M."/>
            <person name="Scherer S."/>
            <person name="Magee B.B."/>
            <person name="Whiteway M."/>
            <person name="Chibana H."/>
            <person name="Nantel A."/>
            <person name="Magee P.T."/>
        </authorList>
    </citation>
    <scope>GENOME REANNOTATION</scope>
    <source>
        <strain>SC5314 / ATCC MYA-2876</strain>
    </source>
</reference>
<reference key="5">
    <citation type="journal article" date="2013" name="Genome Biol.">
        <title>Assembly of a phased diploid Candida albicans genome facilitates allele-specific measurements and provides a simple model for repeat and indel structure.</title>
        <authorList>
            <person name="Muzzey D."/>
            <person name="Schwartz K."/>
            <person name="Weissman J.S."/>
            <person name="Sherlock G."/>
        </authorList>
    </citation>
    <scope>NUCLEOTIDE SEQUENCE [LARGE SCALE GENOMIC DNA]</scope>
    <scope>GENOME REANNOTATION</scope>
    <source>
        <strain>SC5314 / ATCC MYA-2876</strain>
    </source>
</reference>
<gene>
    <name type="primary">NAG1</name>
    <name type="ordered locus">CAALFM_C604590CA</name>
    <name type="ORF">CaO19.2156</name>
    <name type="ORF">CaO19.9703</name>
</gene>
<keyword id="KW-0119">Carbohydrate metabolism</keyword>
<keyword id="KW-0903">Direct protein sequencing</keyword>
<keyword id="KW-0378">Hydrolase</keyword>
<keyword id="KW-1185">Reference proteome</keyword>
<organism>
    <name type="scientific">Candida albicans (strain SC5314 / ATCC MYA-2876)</name>
    <name type="common">Yeast</name>
    <dbReference type="NCBI Taxonomy" id="237561"/>
    <lineage>
        <taxon>Eukaryota</taxon>
        <taxon>Fungi</taxon>
        <taxon>Dikarya</taxon>
        <taxon>Ascomycota</taxon>
        <taxon>Saccharomycotina</taxon>
        <taxon>Pichiomycetes</taxon>
        <taxon>Debaryomycetaceae</taxon>
        <taxon>Candida/Lodderomyces clade</taxon>
        <taxon>Candida</taxon>
    </lineage>
</organism>
<accession>Q04802</accession>
<accession>A0A1D8PQG4</accession>
<accession>Q59RG3</accession>
<accession>Q59RW3</accession>
<proteinExistence type="evidence at protein level"/>